<organism>
    <name type="scientific">Shewanella halifaxensis (strain HAW-EB4)</name>
    <dbReference type="NCBI Taxonomy" id="458817"/>
    <lineage>
        <taxon>Bacteria</taxon>
        <taxon>Pseudomonadati</taxon>
        <taxon>Pseudomonadota</taxon>
        <taxon>Gammaproteobacteria</taxon>
        <taxon>Alteromonadales</taxon>
        <taxon>Shewanellaceae</taxon>
        <taxon>Shewanella</taxon>
    </lineage>
</organism>
<gene>
    <name evidence="1" type="primary">mutL</name>
    <name type="ordered locus">Shal_3636</name>
</gene>
<evidence type="ECO:0000255" key="1">
    <source>
        <dbReference type="HAMAP-Rule" id="MF_00149"/>
    </source>
</evidence>
<evidence type="ECO:0000256" key="2">
    <source>
        <dbReference type="SAM" id="MobiDB-lite"/>
    </source>
</evidence>
<accession>B0TU66</accession>
<comment type="function">
    <text evidence="1">This protein is involved in the repair of mismatches in DNA. It is required for dam-dependent methyl-directed DNA mismatch repair. May act as a 'molecular matchmaker', a protein that promotes the formation of a stable complex between two or more DNA-binding proteins in an ATP-dependent manner without itself being part of a final effector complex.</text>
</comment>
<comment type="similarity">
    <text evidence="1">Belongs to the DNA mismatch repair MutL/HexB family.</text>
</comment>
<protein>
    <recommendedName>
        <fullName evidence="1">DNA mismatch repair protein MutL</fullName>
    </recommendedName>
</protein>
<dbReference type="EMBL" id="CP000931">
    <property type="protein sequence ID" value="ABZ78177.1"/>
    <property type="molecule type" value="Genomic_DNA"/>
</dbReference>
<dbReference type="RefSeq" id="WP_012278696.1">
    <property type="nucleotide sequence ID" value="NC_010334.1"/>
</dbReference>
<dbReference type="SMR" id="B0TU66"/>
<dbReference type="STRING" id="458817.Shal_3636"/>
<dbReference type="KEGG" id="shl:Shal_3636"/>
<dbReference type="eggNOG" id="COG0323">
    <property type="taxonomic scope" value="Bacteria"/>
</dbReference>
<dbReference type="HOGENOM" id="CLU_004131_5_1_6"/>
<dbReference type="OrthoDB" id="9763467at2"/>
<dbReference type="Proteomes" id="UP000001317">
    <property type="component" value="Chromosome"/>
</dbReference>
<dbReference type="GO" id="GO:0032300">
    <property type="term" value="C:mismatch repair complex"/>
    <property type="evidence" value="ECO:0007669"/>
    <property type="project" value="InterPro"/>
</dbReference>
<dbReference type="GO" id="GO:0005524">
    <property type="term" value="F:ATP binding"/>
    <property type="evidence" value="ECO:0007669"/>
    <property type="project" value="InterPro"/>
</dbReference>
<dbReference type="GO" id="GO:0016887">
    <property type="term" value="F:ATP hydrolysis activity"/>
    <property type="evidence" value="ECO:0007669"/>
    <property type="project" value="InterPro"/>
</dbReference>
<dbReference type="GO" id="GO:0140664">
    <property type="term" value="F:ATP-dependent DNA damage sensor activity"/>
    <property type="evidence" value="ECO:0007669"/>
    <property type="project" value="InterPro"/>
</dbReference>
<dbReference type="GO" id="GO:0030983">
    <property type="term" value="F:mismatched DNA binding"/>
    <property type="evidence" value="ECO:0007669"/>
    <property type="project" value="InterPro"/>
</dbReference>
<dbReference type="GO" id="GO:0006298">
    <property type="term" value="P:mismatch repair"/>
    <property type="evidence" value="ECO:0007669"/>
    <property type="project" value="UniProtKB-UniRule"/>
</dbReference>
<dbReference type="CDD" id="cd16926">
    <property type="entry name" value="HATPase_MutL-MLH-PMS-like"/>
    <property type="match status" value="1"/>
</dbReference>
<dbReference type="CDD" id="cd03482">
    <property type="entry name" value="MutL_Trans_MutL"/>
    <property type="match status" value="1"/>
</dbReference>
<dbReference type="FunFam" id="3.30.230.10:FF:000013">
    <property type="entry name" value="DNA mismatch repair endonuclease MutL"/>
    <property type="match status" value="1"/>
</dbReference>
<dbReference type="FunFam" id="3.30.565.10:FF:000003">
    <property type="entry name" value="DNA mismatch repair endonuclease MutL"/>
    <property type="match status" value="1"/>
</dbReference>
<dbReference type="Gene3D" id="3.30.230.10">
    <property type="match status" value="1"/>
</dbReference>
<dbReference type="Gene3D" id="3.30.565.10">
    <property type="entry name" value="Histidine kinase-like ATPase, C-terminal domain"/>
    <property type="match status" value="1"/>
</dbReference>
<dbReference type="Gene3D" id="3.30.1370.100">
    <property type="entry name" value="MutL, C-terminal domain, regulatory subdomain"/>
    <property type="match status" value="1"/>
</dbReference>
<dbReference type="HAMAP" id="MF_00149">
    <property type="entry name" value="DNA_mis_repair"/>
    <property type="match status" value="1"/>
</dbReference>
<dbReference type="InterPro" id="IPR014762">
    <property type="entry name" value="DNA_mismatch_repair_CS"/>
</dbReference>
<dbReference type="InterPro" id="IPR020667">
    <property type="entry name" value="DNA_mismatch_repair_MutL"/>
</dbReference>
<dbReference type="InterPro" id="IPR013507">
    <property type="entry name" value="DNA_mismatch_S5_2-like"/>
</dbReference>
<dbReference type="InterPro" id="IPR036890">
    <property type="entry name" value="HATPase_C_sf"/>
</dbReference>
<dbReference type="InterPro" id="IPR002099">
    <property type="entry name" value="MutL/Mlh/PMS"/>
</dbReference>
<dbReference type="InterPro" id="IPR038973">
    <property type="entry name" value="MutL/Mlh/Pms-like"/>
</dbReference>
<dbReference type="InterPro" id="IPR014790">
    <property type="entry name" value="MutL_C"/>
</dbReference>
<dbReference type="InterPro" id="IPR042121">
    <property type="entry name" value="MutL_C_regsub"/>
</dbReference>
<dbReference type="InterPro" id="IPR037198">
    <property type="entry name" value="MutL_C_sf"/>
</dbReference>
<dbReference type="InterPro" id="IPR020568">
    <property type="entry name" value="Ribosomal_Su5_D2-typ_SF"/>
</dbReference>
<dbReference type="InterPro" id="IPR014721">
    <property type="entry name" value="Ribsml_uS5_D2-typ_fold_subgr"/>
</dbReference>
<dbReference type="NCBIfam" id="TIGR00585">
    <property type="entry name" value="mutl"/>
    <property type="match status" value="1"/>
</dbReference>
<dbReference type="NCBIfam" id="NF000948">
    <property type="entry name" value="PRK00095.1-1"/>
    <property type="match status" value="1"/>
</dbReference>
<dbReference type="PANTHER" id="PTHR10073">
    <property type="entry name" value="DNA MISMATCH REPAIR PROTEIN MLH, PMS, MUTL"/>
    <property type="match status" value="1"/>
</dbReference>
<dbReference type="PANTHER" id="PTHR10073:SF12">
    <property type="entry name" value="DNA MISMATCH REPAIR PROTEIN MLH1"/>
    <property type="match status" value="1"/>
</dbReference>
<dbReference type="Pfam" id="PF01119">
    <property type="entry name" value="DNA_mis_repair"/>
    <property type="match status" value="1"/>
</dbReference>
<dbReference type="Pfam" id="PF13589">
    <property type="entry name" value="HATPase_c_3"/>
    <property type="match status" value="1"/>
</dbReference>
<dbReference type="Pfam" id="PF08676">
    <property type="entry name" value="MutL_C"/>
    <property type="match status" value="1"/>
</dbReference>
<dbReference type="SMART" id="SM01340">
    <property type="entry name" value="DNA_mis_repair"/>
    <property type="match status" value="1"/>
</dbReference>
<dbReference type="SMART" id="SM00853">
    <property type="entry name" value="MutL_C"/>
    <property type="match status" value="1"/>
</dbReference>
<dbReference type="SUPFAM" id="SSF55874">
    <property type="entry name" value="ATPase domain of HSP90 chaperone/DNA topoisomerase II/histidine kinase"/>
    <property type="match status" value="1"/>
</dbReference>
<dbReference type="SUPFAM" id="SSF118116">
    <property type="entry name" value="DNA mismatch repair protein MutL"/>
    <property type="match status" value="1"/>
</dbReference>
<dbReference type="SUPFAM" id="SSF54211">
    <property type="entry name" value="Ribosomal protein S5 domain 2-like"/>
    <property type="match status" value="1"/>
</dbReference>
<dbReference type="PROSITE" id="PS00058">
    <property type="entry name" value="DNA_MISMATCH_REPAIR_1"/>
    <property type="match status" value="1"/>
</dbReference>
<reference key="1">
    <citation type="submission" date="2008-01" db="EMBL/GenBank/DDBJ databases">
        <title>Complete sequence of Shewanella halifaxensis HAW-EB4.</title>
        <authorList>
            <consortium name="US DOE Joint Genome Institute"/>
            <person name="Copeland A."/>
            <person name="Lucas S."/>
            <person name="Lapidus A."/>
            <person name="Glavina del Rio T."/>
            <person name="Dalin E."/>
            <person name="Tice H."/>
            <person name="Bruce D."/>
            <person name="Goodwin L."/>
            <person name="Pitluck S."/>
            <person name="Sims D."/>
            <person name="Brettin T."/>
            <person name="Detter J.C."/>
            <person name="Han C."/>
            <person name="Kuske C.R."/>
            <person name="Schmutz J."/>
            <person name="Larimer F."/>
            <person name="Land M."/>
            <person name="Hauser L."/>
            <person name="Kyrpides N."/>
            <person name="Kim E."/>
            <person name="Zhao J.-S."/>
            <person name="Richardson P."/>
        </authorList>
    </citation>
    <scope>NUCLEOTIDE SEQUENCE [LARGE SCALE GENOMIC DNA]</scope>
    <source>
        <strain>HAW-EB4</strain>
    </source>
</reference>
<feature type="chain" id="PRO_1000076713" description="DNA mismatch repair protein MutL">
    <location>
        <begin position="1"/>
        <end position="637"/>
    </location>
</feature>
<feature type="region of interest" description="Disordered" evidence="2">
    <location>
        <begin position="343"/>
        <end position="411"/>
    </location>
</feature>
<feature type="compositionally biased region" description="Polar residues" evidence="2">
    <location>
        <begin position="343"/>
        <end position="352"/>
    </location>
</feature>
<feature type="compositionally biased region" description="Basic and acidic residues" evidence="2">
    <location>
        <begin position="365"/>
        <end position="380"/>
    </location>
</feature>
<feature type="compositionally biased region" description="Low complexity" evidence="2">
    <location>
        <begin position="388"/>
        <end position="397"/>
    </location>
</feature>
<sequence>MAIEKLPPQLANQIAAGEVVERPASVIKELVENSLDAGATRVDIEIEKGGSKLIRIRDNGSGIPKADLCLALSRHATSKLKSLDDLEAILSFGFRGEALASISSVSRLILTSRTAEQAEAWQAHAEGTEMAVKVLPAAHPVGSTVEAVDLFFNTPARRRFLKSDKTEFTHIDEWLKRIALARRDIHFTLKHNGKTVRNYRPANTESQYIQRLALVCGKAFAETCLRIECQHNDLSLSGYLQSPSSANGYSETQYFYVNGRLVKDRLVNHAVRQAFAQYAEGVSPGYVLMLDLDPHQVDVNVHPAKHEVRFHQSRYVHDFILQALQSAISQSMELALNNEPEIQQSPDRQVSPTRGAVTAPLYSESIERKPSVSYDVRDSHSVTNQRDYSSGSSSYRSPLKPSARNGDVSLPSQSSIRAYGELLSTQSSSTHSDRVLSTQQNNYAVRSPAGNQNGLAASNSHAASMPAVIAGEFWVLVRDDKISLLSISMVARAVLKAEIAAKFSQGLVGQPLLMPVAVAVDDDWLAIIENREQLLRKLGIELSIRLGQLIIKKVPPYLRNSQLAVLIPELLQWIQLELPSDAAVVKWLAEQGANRFTSAGEAWFGLNALPDDVQRELYNLSQDLPWEQWMKENQSDR</sequence>
<proteinExistence type="inferred from homology"/>
<keyword id="KW-0227">DNA damage</keyword>
<keyword id="KW-0234">DNA repair</keyword>
<name>MUTL_SHEHH</name>